<keyword id="KW-0002">3D-structure</keyword>
<keyword id="KW-0496">Mitochondrion</keyword>
<keyword id="KW-1267">Proteomics identification</keyword>
<keyword id="KW-1185">Reference proteome</keyword>
<keyword id="KW-0687">Ribonucleoprotein</keyword>
<keyword id="KW-0689">Ribosomal protein</keyword>
<keyword id="KW-0809">Transit peptide</keyword>
<accession>Q9Y3D5</accession>
<feature type="transit peptide" description="Mitochondrion" evidence="2">
    <location>
        <begin position="1"/>
        <end status="unknown"/>
    </location>
</feature>
<feature type="chain" id="PRO_0000030629" description="Small ribosomal subunit protein bS18m">
    <location>
        <begin status="unknown"/>
        <end position="142"/>
    </location>
</feature>
<feature type="turn" evidence="8">
    <location>
        <begin position="66"/>
        <end position="69"/>
    </location>
</feature>
<feature type="helix" evidence="8">
    <location>
        <begin position="77"/>
        <end position="80"/>
    </location>
</feature>
<feature type="helix" evidence="8">
    <location>
        <begin position="81"/>
        <end position="83"/>
    </location>
</feature>
<feature type="turn" evidence="8">
    <location>
        <begin position="86"/>
        <end position="88"/>
    </location>
</feature>
<feature type="helix" evidence="8">
    <location>
        <begin position="94"/>
        <end position="97"/>
    </location>
</feature>
<feature type="helix" evidence="8">
    <location>
        <begin position="101"/>
        <end position="116"/>
    </location>
</feature>
<feature type="strand" evidence="8">
    <location>
        <begin position="122"/>
        <end position="124"/>
    </location>
</feature>
<feature type="helix" evidence="8">
    <location>
        <begin position="127"/>
        <end position="129"/>
    </location>
</feature>
<comment type="subunit">
    <text evidence="3">Component of the mitochondrial small ribosomal subunit (mt-SSU). Mature mammalian 55S mitochondrial ribosomes consist of a small (28S) and a large (39S) subunit. The 28S small subunit contains a 12S ribosomal RNA (12S mt-rRNA) and 30 different proteins. The 39S large subunit contains a 16S rRNA (16S mt-rRNA), a copy of mitochondrial valine transfer RNA (mt-tRNA(Val)), which plays an integral structural role, and 52 different proteins. bS18m has a zinc binding site.</text>
</comment>
<comment type="subcellular location">
    <subcellularLocation>
        <location evidence="3">Mitochondrion</location>
    </subcellularLocation>
</comment>
<comment type="miscellaneous">
    <text evidence="6">There are 3 mitochondrial isoforms of bS18 in mammalia, localizing to 3 distinct sites in the mitoribosome. bS18m (bs18c, this protein) binds to the same site as bacterial bS18, mS40 (bS18b) binds to a novel location of the 28S small subunit, and mL66 (bS18a) binds to the 39S large subunit.</text>
</comment>
<comment type="similarity">
    <text evidence="1">Belongs to the bacterial ribosomal protein bS18 family.</text>
</comment>
<protein>
    <recommendedName>
        <fullName evidence="4">Small ribosomal subunit protein bS18m</fullName>
    </recommendedName>
    <alternativeName>
        <fullName>28S ribosomal protein S18-1, mitochondrial</fullName>
        <shortName>MRP-S18-1</shortName>
    </alternativeName>
    <alternativeName>
        <fullName>28S ribosomal protein S18c, mitochondrial</fullName>
        <shortName>MRP-S18-c</shortName>
        <shortName>Mrps18-c</shortName>
        <shortName>S18mt-c</shortName>
    </alternativeName>
    <alternativeName>
        <fullName evidence="4">Small ribosomal subunit protein bS18c</fullName>
    </alternativeName>
</protein>
<organism>
    <name type="scientific">Homo sapiens</name>
    <name type="common">Human</name>
    <dbReference type="NCBI Taxonomy" id="9606"/>
    <lineage>
        <taxon>Eukaryota</taxon>
        <taxon>Metazoa</taxon>
        <taxon>Chordata</taxon>
        <taxon>Craniata</taxon>
        <taxon>Vertebrata</taxon>
        <taxon>Euteleostomi</taxon>
        <taxon>Mammalia</taxon>
        <taxon>Eutheria</taxon>
        <taxon>Euarchontoglires</taxon>
        <taxon>Primates</taxon>
        <taxon>Haplorrhini</taxon>
        <taxon>Catarrhini</taxon>
        <taxon>Hominidae</taxon>
        <taxon>Homo</taxon>
    </lineage>
</organism>
<proteinExistence type="evidence at protein level"/>
<sequence>MAAVVAVCGGLGRKKLTHLVTAAVSLTHPGTHTVLWRRGCSQQVSSNEDLPISMENPYKEPLKKCILCGKHVDYKNVQLLSQFVSPFTGCIYGRHITGLCGKKQKEITKAIKRAQIMGFMPVTYKDPAYLKDPKVCNIRYRE</sequence>
<evidence type="ECO:0000250" key="1">
    <source>
        <dbReference type="UniProtKB" id="P80382"/>
    </source>
</evidence>
<evidence type="ECO:0000255" key="2"/>
<evidence type="ECO:0000269" key="3">
    <source>
    </source>
</evidence>
<evidence type="ECO:0000303" key="4">
    <source>
    </source>
</evidence>
<evidence type="ECO:0000305" key="5"/>
<evidence type="ECO:0000305" key="6">
    <source>
    </source>
</evidence>
<evidence type="ECO:0007744" key="7">
    <source>
        <dbReference type="PDB" id="3J9M"/>
    </source>
</evidence>
<evidence type="ECO:0007829" key="8">
    <source>
        <dbReference type="PDB" id="8CSS"/>
    </source>
</evidence>
<name>RT18C_HUMAN</name>
<dbReference type="EMBL" id="AF151892">
    <property type="protein sequence ID" value="AAD34129.1"/>
    <property type="molecule type" value="mRNA"/>
</dbReference>
<dbReference type="EMBL" id="BC005186">
    <property type="protein sequence ID" value="AAH05186.1"/>
    <property type="molecule type" value="mRNA"/>
</dbReference>
<dbReference type="CCDS" id="CCDS3604.1"/>
<dbReference type="RefSeq" id="NP_001284698.1">
    <property type="nucleotide sequence ID" value="NM_001297769.1"/>
</dbReference>
<dbReference type="RefSeq" id="NP_001284699.1">
    <property type="nucleotide sequence ID" value="NM_001297770.1"/>
</dbReference>
<dbReference type="RefSeq" id="NP_057151.1">
    <property type="nucleotide sequence ID" value="NM_016067.4"/>
</dbReference>
<dbReference type="PDB" id="3J9M">
    <property type="method" value="EM"/>
    <property type="resolution" value="3.50 A"/>
    <property type="chains" value="AP=1-142"/>
</dbReference>
<dbReference type="PDB" id="6NU2">
    <property type="method" value="EM"/>
    <property type="resolution" value="3.90 A"/>
    <property type="chains" value="AP=47-142"/>
</dbReference>
<dbReference type="PDB" id="6NU3">
    <property type="method" value="EM"/>
    <property type="resolution" value="4.40 A"/>
    <property type="chains" value="AP=1-142"/>
</dbReference>
<dbReference type="PDB" id="6RW4">
    <property type="method" value="EM"/>
    <property type="resolution" value="2.97 A"/>
    <property type="chains" value="P=1-142"/>
</dbReference>
<dbReference type="PDB" id="6RW5">
    <property type="method" value="EM"/>
    <property type="resolution" value="3.14 A"/>
    <property type="chains" value="P=1-142"/>
</dbReference>
<dbReference type="PDB" id="6VLZ">
    <property type="method" value="EM"/>
    <property type="resolution" value="2.97 A"/>
    <property type="chains" value="AP=1-142"/>
</dbReference>
<dbReference type="PDB" id="6VMI">
    <property type="method" value="EM"/>
    <property type="resolution" value="2.96 A"/>
    <property type="chains" value="AP=1-142"/>
</dbReference>
<dbReference type="PDB" id="6ZM5">
    <property type="method" value="EM"/>
    <property type="resolution" value="2.89 A"/>
    <property type="chains" value="AP=1-142"/>
</dbReference>
<dbReference type="PDB" id="6ZM6">
    <property type="method" value="EM"/>
    <property type="resolution" value="2.59 A"/>
    <property type="chains" value="AP=1-142"/>
</dbReference>
<dbReference type="PDB" id="6ZS9">
    <property type="method" value="EM"/>
    <property type="resolution" value="4.00 A"/>
    <property type="chains" value="AP=1-142"/>
</dbReference>
<dbReference type="PDB" id="6ZSA">
    <property type="method" value="EM"/>
    <property type="resolution" value="4.00 A"/>
    <property type="chains" value="AP=1-142"/>
</dbReference>
<dbReference type="PDB" id="6ZSB">
    <property type="method" value="EM"/>
    <property type="resolution" value="4.50 A"/>
    <property type="chains" value="AP=1-142"/>
</dbReference>
<dbReference type="PDB" id="6ZSC">
    <property type="method" value="EM"/>
    <property type="resolution" value="3.50 A"/>
    <property type="chains" value="AP=1-142"/>
</dbReference>
<dbReference type="PDB" id="6ZSD">
    <property type="method" value="EM"/>
    <property type="resolution" value="3.70 A"/>
    <property type="chains" value="AP=1-142"/>
</dbReference>
<dbReference type="PDB" id="6ZSE">
    <property type="method" value="EM"/>
    <property type="resolution" value="5.00 A"/>
    <property type="chains" value="AP=1-142"/>
</dbReference>
<dbReference type="PDB" id="6ZSG">
    <property type="method" value="EM"/>
    <property type="resolution" value="4.00 A"/>
    <property type="chains" value="AP=1-142"/>
</dbReference>
<dbReference type="PDB" id="7A5F">
    <property type="method" value="EM"/>
    <property type="resolution" value="4.40 A"/>
    <property type="chains" value="P6=1-142"/>
</dbReference>
<dbReference type="PDB" id="7A5G">
    <property type="method" value="EM"/>
    <property type="resolution" value="4.33 A"/>
    <property type="chains" value="P6=1-142"/>
</dbReference>
<dbReference type="PDB" id="7A5I">
    <property type="method" value="EM"/>
    <property type="resolution" value="3.70 A"/>
    <property type="chains" value="P6=1-142"/>
</dbReference>
<dbReference type="PDB" id="7A5K">
    <property type="method" value="EM"/>
    <property type="resolution" value="3.70 A"/>
    <property type="chains" value="P6=1-142"/>
</dbReference>
<dbReference type="PDB" id="7L08">
    <property type="method" value="EM"/>
    <property type="resolution" value="3.49 A"/>
    <property type="chains" value="AP=1-142"/>
</dbReference>
<dbReference type="PDB" id="7OG4">
    <property type="method" value="EM"/>
    <property type="resolution" value="3.80 A"/>
    <property type="chains" value="AP=1-142"/>
</dbReference>
<dbReference type="PDB" id="7P2E">
    <property type="method" value="EM"/>
    <property type="resolution" value="2.40 A"/>
    <property type="chains" value="P=1-142"/>
</dbReference>
<dbReference type="PDB" id="7PNX">
    <property type="method" value="EM"/>
    <property type="resolution" value="2.76 A"/>
    <property type="chains" value="P=1-142"/>
</dbReference>
<dbReference type="PDB" id="7PNY">
    <property type="method" value="EM"/>
    <property type="resolution" value="3.06 A"/>
    <property type="chains" value="P=1-142"/>
</dbReference>
<dbReference type="PDB" id="7PNZ">
    <property type="method" value="EM"/>
    <property type="resolution" value="3.09 A"/>
    <property type="chains" value="P=1-142"/>
</dbReference>
<dbReference type="PDB" id="7PO0">
    <property type="method" value="EM"/>
    <property type="resolution" value="2.90 A"/>
    <property type="chains" value="P=1-142"/>
</dbReference>
<dbReference type="PDB" id="7PO1">
    <property type="method" value="EM"/>
    <property type="resolution" value="2.92 A"/>
    <property type="chains" value="P=1-142"/>
</dbReference>
<dbReference type="PDB" id="7PO2">
    <property type="method" value="EM"/>
    <property type="resolution" value="3.09 A"/>
    <property type="chains" value="P=1-142"/>
</dbReference>
<dbReference type="PDB" id="7PO3">
    <property type="method" value="EM"/>
    <property type="resolution" value="2.92 A"/>
    <property type="chains" value="P=1-142"/>
</dbReference>
<dbReference type="PDB" id="7QI4">
    <property type="method" value="EM"/>
    <property type="resolution" value="2.21 A"/>
    <property type="chains" value="AP=1-142"/>
</dbReference>
<dbReference type="PDB" id="7QI5">
    <property type="method" value="EM"/>
    <property type="resolution" value="2.63 A"/>
    <property type="chains" value="AP=1-142"/>
</dbReference>
<dbReference type="PDB" id="7QI6">
    <property type="method" value="EM"/>
    <property type="resolution" value="2.98 A"/>
    <property type="chains" value="AP=1-142"/>
</dbReference>
<dbReference type="PDB" id="8ANY">
    <property type="method" value="EM"/>
    <property type="resolution" value="2.85 A"/>
    <property type="chains" value="AP=1-142"/>
</dbReference>
<dbReference type="PDB" id="8CSP">
    <property type="method" value="EM"/>
    <property type="resolution" value="2.66 A"/>
    <property type="chains" value="P=1-142"/>
</dbReference>
<dbReference type="PDB" id="8CSQ">
    <property type="method" value="EM"/>
    <property type="resolution" value="2.54 A"/>
    <property type="chains" value="P=1-142"/>
</dbReference>
<dbReference type="PDB" id="8CSR">
    <property type="method" value="EM"/>
    <property type="resolution" value="2.54 A"/>
    <property type="chains" value="P=1-142"/>
</dbReference>
<dbReference type="PDB" id="8CSS">
    <property type="method" value="EM"/>
    <property type="resolution" value="2.36 A"/>
    <property type="chains" value="P=1-142"/>
</dbReference>
<dbReference type="PDB" id="8CST">
    <property type="method" value="EM"/>
    <property type="resolution" value="2.85 A"/>
    <property type="chains" value="P=1-142"/>
</dbReference>
<dbReference type="PDB" id="8CSU">
    <property type="method" value="EM"/>
    <property type="resolution" value="3.03 A"/>
    <property type="chains" value="P=1-142"/>
</dbReference>
<dbReference type="PDB" id="8K2A">
    <property type="method" value="EM"/>
    <property type="resolution" value="2.90 A"/>
    <property type="chains" value="ST=1-142"/>
</dbReference>
<dbReference type="PDB" id="8OIR">
    <property type="method" value="EM"/>
    <property type="resolution" value="3.10 A"/>
    <property type="chains" value="AP=1-142"/>
</dbReference>
<dbReference type="PDB" id="8OIS">
    <property type="method" value="EM"/>
    <property type="resolution" value="3.00 A"/>
    <property type="chains" value="AP=1-142"/>
</dbReference>
<dbReference type="PDB" id="8QRK">
    <property type="method" value="EM"/>
    <property type="resolution" value="6.69 A"/>
    <property type="chains" value="P=1-142"/>
</dbReference>
<dbReference type="PDB" id="8QRL">
    <property type="method" value="EM"/>
    <property type="resolution" value="3.34 A"/>
    <property type="chains" value="P=1-142"/>
</dbReference>
<dbReference type="PDB" id="8QRM">
    <property type="method" value="EM"/>
    <property type="resolution" value="3.05 A"/>
    <property type="chains" value="P=1-142"/>
</dbReference>
<dbReference type="PDB" id="8QRN">
    <property type="method" value="EM"/>
    <property type="resolution" value="2.98 A"/>
    <property type="chains" value="P=1-142"/>
</dbReference>
<dbReference type="PDB" id="8RRI">
    <property type="method" value="EM"/>
    <property type="resolution" value="2.40 A"/>
    <property type="chains" value="AP=1-142"/>
</dbReference>
<dbReference type="PDB" id="8XT0">
    <property type="method" value="EM"/>
    <property type="resolution" value="3.20 A"/>
    <property type="chains" value="ST=1-142"/>
</dbReference>
<dbReference type="PDB" id="8XT2">
    <property type="method" value="EM"/>
    <property type="resolution" value="3.30 A"/>
    <property type="chains" value="ST=1-142"/>
</dbReference>
<dbReference type="PDBsum" id="3J9M"/>
<dbReference type="PDBsum" id="6NU2"/>
<dbReference type="PDBsum" id="6NU3"/>
<dbReference type="PDBsum" id="6RW4"/>
<dbReference type="PDBsum" id="6RW5"/>
<dbReference type="PDBsum" id="6VLZ"/>
<dbReference type="PDBsum" id="6VMI"/>
<dbReference type="PDBsum" id="6ZM5"/>
<dbReference type="PDBsum" id="6ZM6"/>
<dbReference type="PDBsum" id="6ZS9"/>
<dbReference type="PDBsum" id="6ZSA"/>
<dbReference type="PDBsum" id="6ZSB"/>
<dbReference type="PDBsum" id="6ZSC"/>
<dbReference type="PDBsum" id="6ZSD"/>
<dbReference type="PDBsum" id="6ZSE"/>
<dbReference type="PDBsum" id="6ZSG"/>
<dbReference type="PDBsum" id="7A5F"/>
<dbReference type="PDBsum" id="7A5G"/>
<dbReference type="PDBsum" id="7A5I"/>
<dbReference type="PDBsum" id="7A5K"/>
<dbReference type="PDBsum" id="7L08"/>
<dbReference type="PDBsum" id="7OG4"/>
<dbReference type="PDBsum" id="7P2E"/>
<dbReference type="PDBsum" id="7PNX"/>
<dbReference type="PDBsum" id="7PNY"/>
<dbReference type="PDBsum" id="7PNZ"/>
<dbReference type="PDBsum" id="7PO0"/>
<dbReference type="PDBsum" id="7PO1"/>
<dbReference type="PDBsum" id="7PO2"/>
<dbReference type="PDBsum" id="7PO3"/>
<dbReference type="PDBsum" id="7QI4"/>
<dbReference type="PDBsum" id="7QI5"/>
<dbReference type="PDBsum" id="7QI6"/>
<dbReference type="PDBsum" id="8ANY"/>
<dbReference type="PDBsum" id="8CSP"/>
<dbReference type="PDBsum" id="8CSQ"/>
<dbReference type="PDBsum" id="8CSR"/>
<dbReference type="PDBsum" id="8CSS"/>
<dbReference type="PDBsum" id="8CST"/>
<dbReference type="PDBsum" id="8CSU"/>
<dbReference type="PDBsum" id="8K2A"/>
<dbReference type="PDBsum" id="8OIR"/>
<dbReference type="PDBsum" id="8OIS"/>
<dbReference type="PDBsum" id="8QRK"/>
<dbReference type="PDBsum" id="8QRL"/>
<dbReference type="PDBsum" id="8QRM"/>
<dbReference type="PDBsum" id="8QRN"/>
<dbReference type="PDBsum" id="8RRI"/>
<dbReference type="PDBsum" id="8XT0"/>
<dbReference type="PDBsum" id="8XT2"/>
<dbReference type="EMDB" id="EMD-0514"/>
<dbReference type="EMDB" id="EMD-0515"/>
<dbReference type="EMDB" id="EMD-10021"/>
<dbReference type="EMDB" id="EMD-10022"/>
<dbReference type="EMDB" id="EMD-11278"/>
<dbReference type="EMDB" id="EMD-11279"/>
<dbReference type="EMDB" id="EMD-11390"/>
<dbReference type="EMDB" id="EMD-11391"/>
<dbReference type="EMDB" id="EMD-11392"/>
<dbReference type="EMDB" id="EMD-11393"/>
<dbReference type="EMDB" id="EMD-11394"/>
<dbReference type="EMDB" id="EMD-11395"/>
<dbReference type="EMDB" id="EMD-11397"/>
<dbReference type="EMDB" id="EMD-11641"/>
<dbReference type="EMDB" id="EMD-11642"/>
<dbReference type="EMDB" id="EMD-11644"/>
<dbReference type="EMDB" id="EMD-11646"/>
<dbReference type="EMDB" id="EMD-12877"/>
<dbReference type="EMDB" id="EMD-13170"/>
<dbReference type="EMDB" id="EMD-13555"/>
<dbReference type="EMDB" id="EMD-13556"/>
<dbReference type="EMDB" id="EMD-13557"/>
<dbReference type="EMDB" id="EMD-13558"/>
<dbReference type="EMDB" id="EMD-13559"/>
<dbReference type="EMDB" id="EMD-13560"/>
<dbReference type="EMDB" id="EMD-13561"/>
<dbReference type="EMDB" id="EMD-13980"/>
<dbReference type="EMDB" id="EMD-13981"/>
<dbReference type="EMDB" id="EMD-13982"/>
<dbReference type="EMDB" id="EMD-15544"/>
<dbReference type="EMDB" id="EMD-16897"/>
<dbReference type="EMDB" id="EMD-16898"/>
<dbReference type="EMDB" id="EMD-19460"/>
<dbReference type="EMDB" id="EMD-21233"/>
<dbReference type="EMDB" id="EMD-21242"/>
<dbReference type="EMDB" id="EMD-23096"/>
<dbReference type="EMDB" id="EMD-26966"/>
<dbReference type="EMDB" id="EMD-26967"/>
<dbReference type="EMDB" id="EMD-26968"/>
<dbReference type="EMDB" id="EMD-26969"/>
<dbReference type="EMDB" id="EMD-26970"/>
<dbReference type="EMDB" id="EMD-26971"/>
<dbReference type="EMDB" id="EMD-36836"/>
<dbReference type="EMDB" id="EMD-38632"/>
<dbReference type="EMDB" id="EMD-38634"/>
<dbReference type="SMR" id="Q9Y3D5"/>
<dbReference type="BioGRID" id="119229">
    <property type="interactions" value="223"/>
</dbReference>
<dbReference type="ComplexPortal" id="CPX-5225">
    <property type="entry name" value="28S mitochondrial small ribosomal subunit"/>
</dbReference>
<dbReference type="CORUM" id="Q9Y3D5"/>
<dbReference type="FunCoup" id="Q9Y3D5">
    <property type="interactions" value="957"/>
</dbReference>
<dbReference type="IntAct" id="Q9Y3D5">
    <property type="interactions" value="135"/>
</dbReference>
<dbReference type="MINT" id="Q9Y3D5"/>
<dbReference type="STRING" id="9606.ENSP00000295491"/>
<dbReference type="iPTMnet" id="Q9Y3D5"/>
<dbReference type="PhosphoSitePlus" id="Q9Y3D5"/>
<dbReference type="BioMuta" id="MRPS18C"/>
<dbReference type="DMDM" id="24212202"/>
<dbReference type="jPOST" id="Q9Y3D5"/>
<dbReference type="MassIVE" id="Q9Y3D5"/>
<dbReference type="PaxDb" id="9606-ENSP00000295491"/>
<dbReference type="PeptideAtlas" id="Q9Y3D5"/>
<dbReference type="ProteomicsDB" id="86021"/>
<dbReference type="Pumba" id="Q9Y3D5"/>
<dbReference type="Antibodypedia" id="56067">
    <property type="antibodies" value="109 antibodies from 21 providers"/>
</dbReference>
<dbReference type="DNASU" id="51023"/>
<dbReference type="Ensembl" id="ENST00000295491.9">
    <property type="protein sequence ID" value="ENSP00000295491.4"/>
    <property type="gene ID" value="ENSG00000163319.11"/>
</dbReference>
<dbReference type="GeneID" id="51023"/>
<dbReference type="KEGG" id="hsa:51023"/>
<dbReference type="MANE-Select" id="ENST00000295491.9">
    <property type="protein sequence ID" value="ENSP00000295491.4"/>
    <property type="RefSeq nucleotide sequence ID" value="NM_016067.4"/>
    <property type="RefSeq protein sequence ID" value="NP_057151.1"/>
</dbReference>
<dbReference type="UCSC" id="uc003hor.5">
    <property type="organism name" value="human"/>
</dbReference>
<dbReference type="AGR" id="HGNC:16633"/>
<dbReference type="CTD" id="51023"/>
<dbReference type="DisGeNET" id="51023"/>
<dbReference type="GeneCards" id="MRPS18C"/>
<dbReference type="HGNC" id="HGNC:16633">
    <property type="gene designation" value="MRPS18C"/>
</dbReference>
<dbReference type="HPA" id="ENSG00000163319">
    <property type="expression patterns" value="Low tissue specificity"/>
</dbReference>
<dbReference type="MIM" id="611983">
    <property type="type" value="gene"/>
</dbReference>
<dbReference type="neXtProt" id="NX_Q9Y3D5"/>
<dbReference type="OpenTargets" id="ENSG00000163319"/>
<dbReference type="PharmGKB" id="PA31005"/>
<dbReference type="VEuPathDB" id="HostDB:ENSG00000163319"/>
<dbReference type="eggNOG" id="KOG3162">
    <property type="taxonomic scope" value="Eukaryota"/>
</dbReference>
<dbReference type="GeneTree" id="ENSGT00390000003791"/>
<dbReference type="HOGENOM" id="CLU_139337_2_0_1"/>
<dbReference type="InParanoid" id="Q9Y3D5"/>
<dbReference type="OMA" id="PHYKNVR"/>
<dbReference type="OrthoDB" id="10066799at2759"/>
<dbReference type="PAN-GO" id="Q9Y3D5">
    <property type="GO annotations" value="3 GO annotations based on evolutionary models"/>
</dbReference>
<dbReference type="PhylomeDB" id="Q9Y3D5"/>
<dbReference type="TreeFam" id="TF315059"/>
<dbReference type="PathwayCommons" id="Q9Y3D5"/>
<dbReference type="Reactome" id="R-HSA-5368286">
    <property type="pathway name" value="Mitochondrial translation initiation"/>
</dbReference>
<dbReference type="Reactome" id="R-HSA-5389840">
    <property type="pathway name" value="Mitochondrial translation elongation"/>
</dbReference>
<dbReference type="Reactome" id="R-HSA-5419276">
    <property type="pathway name" value="Mitochondrial translation termination"/>
</dbReference>
<dbReference type="SignaLink" id="Q9Y3D5"/>
<dbReference type="SIGNOR" id="Q9Y3D5"/>
<dbReference type="BioGRID-ORCS" id="51023">
    <property type="hits" value="312 hits in 1155 CRISPR screens"/>
</dbReference>
<dbReference type="ChiTaRS" id="MRPS18C">
    <property type="organism name" value="human"/>
</dbReference>
<dbReference type="GenomeRNAi" id="51023"/>
<dbReference type="Pharos" id="Q9Y3D5">
    <property type="development level" value="Tdark"/>
</dbReference>
<dbReference type="PRO" id="PR:Q9Y3D5"/>
<dbReference type="Proteomes" id="UP000005640">
    <property type="component" value="Chromosome 4"/>
</dbReference>
<dbReference type="RNAct" id="Q9Y3D5">
    <property type="molecule type" value="protein"/>
</dbReference>
<dbReference type="Bgee" id="ENSG00000163319">
    <property type="expression patterns" value="Expressed in hindlimb stylopod muscle and 180 other cell types or tissues"/>
</dbReference>
<dbReference type="ExpressionAtlas" id="Q9Y3D5">
    <property type="expression patterns" value="baseline and differential"/>
</dbReference>
<dbReference type="GO" id="GO:0005743">
    <property type="term" value="C:mitochondrial inner membrane"/>
    <property type="evidence" value="ECO:0000304"/>
    <property type="project" value="Reactome"/>
</dbReference>
<dbReference type="GO" id="GO:0005763">
    <property type="term" value="C:mitochondrial small ribosomal subunit"/>
    <property type="evidence" value="ECO:0000314"/>
    <property type="project" value="UniProtKB"/>
</dbReference>
<dbReference type="GO" id="GO:0005739">
    <property type="term" value="C:mitochondrion"/>
    <property type="evidence" value="ECO:0006056"/>
    <property type="project" value="FlyBase"/>
</dbReference>
<dbReference type="GO" id="GO:0070181">
    <property type="term" value="F:small ribosomal subunit rRNA binding"/>
    <property type="evidence" value="ECO:0000318"/>
    <property type="project" value="GO_Central"/>
</dbReference>
<dbReference type="GO" id="GO:0003735">
    <property type="term" value="F:structural constituent of ribosome"/>
    <property type="evidence" value="ECO:0000318"/>
    <property type="project" value="GO_Central"/>
</dbReference>
<dbReference type="GO" id="GO:0032543">
    <property type="term" value="P:mitochondrial translation"/>
    <property type="evidence" value="ECO:0000303"/>
    <property type="project" value="ComplexPortal"/>
</dbReference>
<dbReference type="GO" id="GO:0006412">
    <property type="term" value="P:translation"/>
    <property type="evidence" value="ECO:0000318"/>
    <property type="project" value="GO_Central"/>
</dbReference>
<dbReference type="FunFam" id="4.10.640.10:FF:000007">
    <property type="entry name" value="28S ribosomal protein S18c, mitochondrial"/>
    <property type="match status" value="1"/>
</dbReference>
<dbReference type="Gene3D" id="4.10.640.10">
    <property type="entry name" value="Ribosomal protein S18"/>
    <property type="match status" value="1"/>
</dbReference>
<dbReference type="InterPro" id="IPR001648">
    <property type="entry name" value="Ribosomal_bS18"/>
</dbReference>
<dbReference type="InterPro" id="IPR018275">
    <property type="entry name" value="Ribosomal_bS18_CS"/>
</dbReference>
<dbReference type="InterPro" id="IPR036870">
    <property type="entry name" value="Ribosomal_bS18_sf"/>
</dbReference>
<dbReference type="NCBIfam" id="TIGR00165">
    <property type="entry name" value="S18"/>
    <property type="match status" value="1"/>
</dbReference>
<dbReference type="PANTHER" id="PTHR13479">
    <property type="entry name" value="30S RIBOSOMAL PROTEIN S18"/>
    <property type="match status" value="1"/>
</dbReference>
<dbReference type="PANTHER" id="PTHR13479:SF40">
    <property type="entry name" value="SMALL RIBOSOMAL SUBUNIT PROTEIN BS18M"/>
    <property type="match status" value="1"/>
</dbReference>
<dbReference type="Pfam" id="PF01084">
    <property type="entry name" value="Ribosomal_S18"/>
    <property type="match status" value="1"/>
</dbReference>
<dbReference type="SUPFAM" id="SSF46911">
    <property type="entry name" value="Ribosomal protein S18"/>
    <property type="match status" value="1"/>
</dbReference>
<dbReference type="PROSITE" id="PS00057">
    <property type="entry name" value="RIBOSOMAL_S18"/>
    <property type="match status" value="1"/>
</dbReference>
<gene>
    <name type="primary">MRPS18C</name>
    <name type="ORF">CGI-134</name>
</gene>
<reference key="1">
    <citation type="journal article" date="2000" name="Genome Res.">
        <title>Identification of novel human genes evolutionarily conserved in Caenorhabditis elegans by comparative proteomics.</title>
        <authorList>
            <person name="Lai C.-H."/>
            <person name="Chou C.-Y."/>
            <person name="Ch'ang L.-Y."/>
            <person name="Liu C.-S."/>
            <person name="Lin W.-C."/>
        </authorList>
    </citation>
    <scope>NUCLEOTIDE SEQUENCE [LARGE SCALE MRNA]</scope>
</reference>
<reference key="2">
    <citation type="journal article" date="2004" name="Genome Res.">
        <title>The status, quality, and expansion of the NIH full-length cDNA project: the Mammalian Gene Collection (MGC).</title>
        <authorList>
            <consortium name="The MGC Project Team"/>
        </authorList>
    </citation>
    <scope>NUCLEOTIDE SEQUENCE [LARGE SCALE MRNA]</scope>
    <source>
        <tissue>Brain</tissue>
    </source>
</reference>
<reference evidence="5" key="3">
    <citation type="journal article" date="2001" name="J. Biol. Chem.">
        <title>The small subunit of the mammalian mitochondrial ribosome: identification of the full complement of ribosomal proteins present.</title>
        <authorList>
            <person name="Koc E.C."/>
            <person name="Burkhart W."/>
            <person name="Blackburn K."/>
            <person name="Moseley A."/>
            <person name="Spremulli L.L."/>
        </authorList>
    </citation>
    <scope>IDENTIFICATION</scope>
</reference>
<reference key="4">
    <citation type="journal article" date="2011" name="BMC Syst. Biol.">
        <title>Initial characterization of the human central proteome.</title>
        <authorList>
            <person name="Burkard T.R."/>
            <person name="Planyavsky M."/>
            <person name="Kaupe I."/>
            <person name="Breitwieser F.P."/>
            <person name="Buerckstuemmer T."/>
            <person name="Bennett K.L."/>
            <person name="Superti-Furga G."/>
            <person name="Colinge J."/>
        </authorList>
    </citation>
    <scope>IDENTIFICATION BY MASS SPECTROMETRY [LARGE SCALE ANALYSIS]</scope>
</reference>
<reference key="5">
    <citation type="journal article" date="2015" name="Proteomics">
        <title>N-terminome analysis of the human mitochondrial proteome.</title>
        <authorList>
            <person name="Vaca Jacome A.S."/>
            <person name="Rabilloud T."/>
            <person name="Schaeffer-Reiss C."/>
            <person name="Rompais M."/>
            <person name="Ayoub D."/>
            <person name="Lane L."/>
            <person name="Bairoch A."/>
            <person name="Van Dorsselaer A."/>
            <person name="Carapito C."/>
        </authorList>
    </citation>
    <scope>IDENTIFICATION BY MASS SPECTROMETRY [LARGE SCALE ANALYSIS]</scope>
</reference>
<reference key="6">
    <citation type="journal article" date="2016" name="Annu. Rev. Biochem.">
        <title>Structure and function of the mitochondrial ribosome.</title>
        <authorList>
            <person name="Greber B.J."/>
            <person name="Ban N."/>
        </authorList>
    </citation>
    <scope>NOMENCLATURE</scope>
</reference>
<reference evidence="7" key="7">
    <citation type="journal article" date="2015" name="Science">
        <title>Ribosome. The structure of the human mitochondrial ribosome.</title>
        <authorList>
            <person name="Amunts A."/>
            <person name="Brown A."/>
            <person name="Toots J."/>
            <person name="Scheres S.H."/>
            <person name="Ramakrishnan V."/>
        </authorList>
    </citation>
    <scope>STRUCTURE BY ELECTRON MICROSCOPY (3.50 ANGSTROMS)</scope>
    <scope>SUBCELLULAR LOCATION</scope>
    <scope>SUBUNIT</scope>
</reference>